<feature type="chain" id="PRO_0000165692" description="Caffeoyl-CoA O-methyltransferase">
    <location>
        <begin position="1"/>
        <end position="247"/>
    </location>
</feature>
<feature type="binding site" evidence="1">
    <location>
        <position position="21"/>
    </location>
    <ligand>
        <name>substrate</name>
    </ligand>
</feature>
<feature type="binding site" evidence="2">
    <location>
        <position position="63"/>
    </location>
    <ligand>
        <name>S-adenosyl-L-methionine</name>
        <dbReference type="ChEBI" id="CHEBI:59789"/>
    </ligand>
</feature>
<feature type="binding site" evidence="2">
    <location>
        <position position="85"/>
    </location>
    <ligand>
        <name>S-adenosyl-L-methionine</name>
        <dbReference type="ChEBI" id="CHEBI:59789"/>
    </ligand>
</feature>
<feature type="binding site" evidence="2">
    <location>
        <begin position="87"/>
        <end position="88"/>
    </location>
    <ligand>
        <name>S-adenosyl-L-methionine</name>
        <dbReference type="ChEBI" id="CHEBI:59789"/>
    </ligand>
</feature>
<feature type="binding site" evidence="2">
    <location>
        <position position="93"/>
    </location>
    <ligand>
        <name>S-adenosyl-L-methionine</name>
        <dbReference type="ChEBI" id="CHEBI:59789"/>
    </ligand>
</feature>
<feature type="binding site" evidence="2">
    <location>
        <position position="111"/>
    </location>
    <ligand>
        <name>S-adenosyl-L-methionine</name>
        <dbReference type="ChEBI" id="CHEBI:59789"/>
    </ligand>
</feature>
<feature type="binding site" evidence="2">
    <location>
        <position position="140"/>
    </location>
    <ligand>
        <name>S-adenosyl-L-methionine</name>
        <dbReference type="ChEBI" id="CHEBI:59789"/>
    </ligand>
</feature>
<feature type="binding site" evidence="2">
    <location>
        <position position="163"/>
    </location>
    <ligand>
        <name>a divalent metal cation</name>
        <dbReference type="ChEBI" id="CHEBI:60240"/>
    </ligand>
</feature>
<feature type="binding site" evidence="1">
    <location>
        <position position="163"/>
    </location>
    <ligand>
        <name>substrate</name>
    </ligand>
</feature>
<feature type="binding site" evidence="2">
    <location>
        <position position="165"/>
    </location>
    <ligand>
        <name>S-adenosyl-L-methionine</name>
        <dbReference type="ChEBI" id="CHEBI:59789"/>
    </ligand>
</feature>
<feature type="binding site" evidence="2">
    <location>
        <position position="189"/>
    </location>
    <ligand>
        <name>a divalent metal cation</name>
        <dbReference type="ChEBI" id="CHEBI:60240"/>
    </ligand>
</feature>
<feature type="binding site" evidence="2">
    <location>
        <position position="190"/>
    </location>
    <ligand>
        <name>a divalent metal cation</name>
        <dbReference type="ChEBI" id="CHEBI:60240"/>
    </ligand>
</feature>
<feature type="binding site" evidence="1">
    <location>
        <position position="194"/>
    </location>
    <ligand>
        <name>substrate</name>
    </ligand>
</feature>
<name>CAMT_POPTM</name>
<accession>Q43095</accession>
<protein>
    <recommendedName>
        <fullName>Caffeoyl-CoA O-methyltransferase</fullName>
        <ecNumber>2.1.1.104</ecNumber>
    </recommendedName>
    <alternativeName>
        <fullName>Trans-caffeoyl-CoA 3-O-methyltransferase</fullName>
        <shortName>CCoAMT</shortName>
        <shortName>CCoAOMT</shortName>
    </alternativeName>
</protein>
<comment type="function">
    <text>Methylates caffeoyl-CoA to feruloyl-CoA and 5-hydroxyferuloyl-CoA to sinapoyl-CoA. Plays a role in the synthesis of feruloylated polysaccharides. Involved in the reinforcement of the plant cell wall. Also involved in the responding to wounding or pathogen challenge by the increased formation of cell wall-bound ferulic acid polymers.</text>
</comment>
<comment type="catalytic activity">
    <reaction>
        <text>(E)-caffeoyl-CoA + S-adenosyl-L-methionine = (E)-feruloyl-CoA + S-adenosyl-L-homocysteine + H(+)</text>
        <dbReference type="Rhea" id="RHEA:16925"/>
        <dbReference type="ChEBI" id="CHEBI:15378"/>
        <dbReference type="ChEBI" id="CHEBI:57856"/>
        <dbReference type="ChEBI" id="CHEBI:59789"/>
        <dbReference type="ChEBI" id="CHEBI:87136"/>
        <dbReference type="ChEBI" id="CHEBI:87305"/>
        <dbReference type="EC" id="2.1.1.104"/>
    </reaction>
</comment>
<comment type="cofactor">
    <cofactor evidence="1">
        <name>a divalent metal cation</name>
        <dbReference type="ChEBI" id="CHEBI:60240"/>
    </cofactor>
    <text evidence="1">Binds 1 divalent metal cation per subunit.</text>
</comment>
<comment type="pathway">
    <text>Aromatic compound metabolism; phenylpropanoid biosynthesis.</text>
</comment>
<comment type="similarity">
    <text evidence="2">Belongs to the class I-like SAM-binding methyltransferase superfamily. Cation-dependent O-methyltransferase family. CCoAMT subfamily.</text>
</comment>
<reference key="1">
    <citation type="online journal article" date="1995" name="Plant Gene Register">
        <title>Cloning of Aspen (Populus tremuloides) Xylem caffeoyl-CoA 3-O-methyltransferase.</title>
        <authorList>
            <person name="Meng H."/>
            <person name="Campbell W.H."/>
        </authorList>
        <locator>PGR95-040</locator>
    </citation>
    <scope>NUCLEOTIDE SEQUENCE [MRNA]</scope>
    <source>
        <tissue>Xylem</tissue>
    </source>
</reference>
<organism>
    <name type="scientific">Populus tremuloides</name>
    <name type="common">Quaking aspen</name>
    <dbReference type="NCBI Taxonomy" id="3693"/>
    <lineage>
        <taxon>Eukaryota</taxon>
        <taxon>Viridiplantae</taxon>
        <taxon>Streptophyta</taxon>
        <taxon>Embryophyta</taxon>
        <taxon>Tracheophyta</taxon>
        <taxon>Spermatophyta</taxon>
        <taxon>Magnoliopsida</taxon>
        <taxon>eudicotyledons</taxon>
        <taxon>Gunneridae</taxon>
        <taxon>Pentapetalae</taxon>
        <taxon>rosids</taxon>
        <taxon>fabids</taxon>
        <taxon>Malpighiales</taxon>
        <taxon>Salicaceae</taxon>
        <taxon>Saliceae</taxon>
        <taxon>Populus</taxon>
    </lineage>
</organism>
<evidence type="ECO:0000250" key="1">
    <source>
        <dbReference type="UniProtKB" id="Q40313"/>
    </source>
</evidence>
<evidence type="ECO:0000255" key="2">
    <source>
        <dbReference type="PROSITE-ProRule" id="PRU01019"/>
    </source>
</evidence>
<keyword id="KW-0438">Lignin biosynthesis</keyword>
<keyword id="KW-0479">Metal-binding</keyword>
<keyword id="KW-0489">Methyltransferase</keyword>
<keyword id="KW-0949">S-adenosyl-L-methionine</keyword>
<keyword id="KW-0808">Transferase</keyword>
<proteinExistence type="evidence at transcript level"/>
<dbReference type="EC" id="2.1.1.104"/>
<dbReference type="EMBL" id="U27116">
    <property type="protein sequence ID" value="AAA80651.1"/>
    <property type="molecule type" value="mRNA"/>
</dbReference>
<dbReference type="PIR" id="T09757">
    <property type="entry name" value="T09757"/>
</dbReference>
<dbReference type="SMR" id="Q43095"/>
<dbReference type="UniPathway" id="UPA00711"/>
<dbReference type="GO" id="GO:0042409">
    <property type="term" value="F:caffeoyl-CoA O-methyltransferase activity"/>
    <property type="evidence" value="ECO:0007669"/>
    <property type="project" value="UniProtKB-EC"/>
</dbReference>
<dbReference type="GO" id="GO:0046872">
    <property type="term" value="F:metal ion binding"/>
    <property type="evidence" value="ECO:0007669"/>
    <property type="project" value="UniProtKB-KW"/>
</dbReference>
<dbReference type="GO" id="GO:0009809">
    <property type="term" value="P:lignin biosynthetic process"/>
    <property type="evidence" value="ECO:0007669"/>
    <property type="project" value="UniProtKB-KW"/>
</dbReference>
<dbReference type="GO" id="GO:0032259">
    <property type="term" value="P:methylation"/>
    <property type="evidence" value="ECO:0007669"/>
    <property type="project" value="UniProtKB-KW"/>
</dbReference>
<dbReference type="FunFam" id="3.40.50.150:FF:000147">
    <property type="entry name" value="Caffeoyl-CoA O-methyltransferase 1"/>
    <property type="match status" value="1"/>
</dbReference>
<dbReference type="Gene3D" id="3.40.50.150">
    <property type="entry name" value="Vaccinia Virus protein VP39"/>
    <property type="match status" value="1"/>
</dbReference>
<dbReference type="InterPro" id="IPR050362">
    <property type="entry name" value="Cation-dep_OMT"/>
</dbReference>
<dbReference type="InterPro" id="IPR029063">
    <property type="entry name" value="SAM-dependent_MTases_sf"/>
</dbReference>
<dbReference type="InterPro" id="IPR002935">
    <property type="entry name" value="SAM_O-MeTrfase"/>
</dbReference>
<dbReference type="PANTHER" id="PTHR10509:SF74">
    <property type="entry name" value="CAFFEOYL-COA O-METHYLTRANSFERASE 2"/>
    <property type="match status" value="1"/>
</dbReference>
<dbReference type="PANTHER" id="PTHR10509">
    <property type="entry name" value="O-METHYLTRANSFERASE-RELATED"/>
    <property type="match status" value="1"/>
</dbReference>
<dbReference type="Pfam" id="PF01596">
    <property type="entry name" value="Methyltransf_3"/>
    <property type="match status" value="1"/>
</dbReference>
<dbReference type="SUPFAM" id="SSF53335">
    <property type="entry name" value="S-adenosyl-L-methionine-dependent methyltransferases"/>
    <property type="match status" value="1"/>
</dbReference>
<dbReference type="PROSITE" id="PS51682">
    <property type="entry name" value="SAM_OMT_I"/>
    <property type="match status" value="1"/>
</dbReference>
<sequence length="247" mass="27867">MATNGEEQQSQAGRHQEVGHKSLLQSDALYQYILETSVYPREPECMKELREVTAKHPWNIMTTSADEGQFLNMLLKLVNAKNTMEIGVYTGYSLLATALAIPEDGKILAMDINRENYELGLPVIQKAGVAHKIDFKEGPALPVLDQMIEDGKYHGSFDFIFVDADKDNYINYHKRLIELVKVGGLIGYDNTLWNGSVVAPPDAPMRKYVRYYRDFVLELNKALAADPRIEICMLPVGDGITLCRRIQ</sequence>